<feature type="chain" id="PRO_0000402984" description="Putative carbamate hydrolase RutD">
    <location>
        <begin position="1"/>
        <end position="266"/>
    </location>
</feature>
<feature type="domain" description="AB hydrolase-1" evidence="1">
    <location>
        <begin position="14"/>
        <end position="115"/>
    </location>
</feature>
<reference key="1">
    <citation type="journal article" date="2010" name="J. Clin. Microbiol.">
        <title>Emergence of a new multidrug-resistant serotype X variant in an epidemic clone of Shigella flexneri.</title>
        <authorList>
            <person name="Ye C."/>
            <person name="Lan R."/>
            <person name="Xia S."/>
            <person name="Zhang J."/>
            <person name="Sun Q."/>
            <person name="Zhang S."/>
            <person name="Jing H."/>
            <person name="Wang L."/>
            <person name="Li Z."/>
            <person name="Zhou Z."/>
            <person name="Zhao A."/>
            <person name="Cui Z."/>
            <person name="Cao J."/>
            <person name="Jin D."/>
            <person name="Huang L."/>
            <person name="Wang Y."/>
            <person name="Luo X."/>
            <person name="Bai X."/>
            <person name="Wang Y."/>
            <person name="Wang P."/>
            <person name="Xu Q."/>
            <person name="Xu J."/>
        </authorList>
    </citation>
    <scope>NUCLEOTIDE SEQUENCE [LARGE SCALE GENOMIC DNA]</scope>
    <source>
        <strain>2002017</strain>
    </source>
</reference>
<name>RUTD_SHIF2</name>
<accession>D2AC40</accession>
<keyword id="KW-0378">Hydrolase</keyword>
<sequence length="266" mass="28925">MKLSLSSPPYADAPVVVLISGLGGSGSYWLPQLAVLEQEYQVVCYDQRGTGNNPDTLAEDYSIAQMAAELHQALVAAGIERYAVVGHALGALVGMQLALDYPASVTMLVSVNGWLRINAHTRRCFQVRERLLYSGGAQAWVEAQPLFLYPADWMAARAPRLEAEDALALAHFQGKNNLLRRLNALKRADFSHHADRIRCPVQIICASDDLLVPTACSSELHAALPDSQKMVMPYGGHACNVTDPETFNALLLNGLASLLHHREAAL</sequence>
<evidence type="ECO:0000255" key="1">
    <source>
        <dbReference type="HAMAP-Rule" id="MF_00832"/>
    </source>
</evidence>
<comment type="function">
    <text evidence="1">Involved in pyrimidine catabolism. May facilitate the hydrolysis of carbamate, a reaction that can also occur spontaneously.</text>
</comment>
<comment type="catalytic activity">
    <reaction evidence="1">
        <text>carbamate + 2 H(+) = NH4(+) + CO2</text>
        <dbReference type="Rhea" id="RHEA:15649"/>
        <dbReference type="ChEBI" id="CHEBI:13941"/>
        <dbReference type="ChEBI" id="CHEBI:15378"/>
        <dbReference type="ChEBI" id="CHEBI:16526"/>
        <dbReference type="ChEBI" id="CHEBI:28938"/>
    </reaction>
</comment>
<comment type="similarity">
    <text evidence="1">Belongs to the AB hydrolase superfamily. Hydrolase RutD family.</text>
</comment>
<proteinExistence type="inferred from homology"/>
<organism>
    <name type="scientific">Shigella flexneri serotype X (strain 2002017)</name>
    <dbReference type="NCBI Taxonomy" id="591020"/>
    <lineage>
        <taxon>Bacteria</taxon>
        <taxon>Pseudomonadati</taxon>
        <taxon>Pseudomonadota</taxon>
        <taxon>Gammaproteobacteria</taxon>
        <taxon>Enterobacterales</taxon>
        <taxon>Enterobacteriaceae</taxon>
        <taxon>Shigella</taxon>
    </lineage>
</organism>
<dbReference type="EC" id="3.5.1.-" evidence="1"/>
<dbReference type="EMBL" id="CP001383">
    <property type="protein sequence ID" value="ADA73358.1"/>
    <property type="molecule type" value="Genomic_DNA"/>
</dbReference>
<dbReference type="RefSeq" id="WP_000777662.1">
    <property type="nucleotide sequence ID" value="NC_017328.1"/>
</dbReference>
<dbReference type="SMR" id="D2AC40"/>
<dbReference type="ESTHER" id="shifl-YCDJ">
    <property type="family name" value="RutD"/>
</dbReference>
<dbReference type="KEGG" id="sfe:SFxv_1098"/>
<dbReference type="PATRIC" id="fig|591020.3.peg.1172"/>
<dbReference type="HOGENOM" id="CLU_020336_50_1_6"/>
<dbReference type="GO" id="GO:0016811">
    <property type="term" value="F:hydrolase activity, acting on carbon-nitrogen (but not peptide) bonds, in linear amides"/>
    <property type="evidence" value="ECO:0007669"/>
    <property type="project" value="InterPro"/>
</dbReference>
<dbReference type="GO" id="GO:0019740">
    <property type="term" value="P:nitrogen utilization"/>
    <property type="evidence" value="ECO:0007669"/>
    <property type="project" value="UniProtKB-UniRule"/>
</dbReference>
<dbReference type="GO" id="GO:0006212">
    <property type="term" value="P:uracil catabolic process"/>
    <property type="evidence" value="ECO:0007669"/>
    <property type="project" value="UniProtKB-UniRule"/>
</dbReference>
<dbReference type="FunFam" id="3.40.50.1820:FF:000052">
    <property type="entry name" value="Putative aminoacrylate hydrolase RutD"/>
    <property type="match status" value="1"/>
</dbReference>
<dbReference type="Gene3D" id="3.40.50.1820">
    <property type="entry name" value="alpha/beta hydrolase"/>
    <property type="match status" value="1"/>
</dbReference>
<dbReference type="HAMAP" id="MF_00832">
    <property type="entry name" value="RutD"/>
    <property type="match status" value="1"/>
</dbReference>
<dbReference type="InterPro" id="IPR000073">
    <property type="entry name" value="AB_hydrolase_1"/>
</dbReference>
<dbReference type="InterPro" id="IPR029058">
    <property type="entry name" value="AB_hydrolase_fold"/>
</dbReference>
<dbReference type="InterPro" id="IPR050266">
    <property type="entry name" value="AB_hydrolase_sf"/>
</dbReference>
<dbReference type="InterPro" id="IPR019913">
    <property type="entry name" value="Pyrimidine_utilisation_RutD"/>
</dbReference>
<dbReference type="NCBIfam" id="TIGR03611">
    <property type="entry name" value="RutD"/>
    <property type="match status" value="1"/>
</dbReference>
<dbReference type="PANTHER" id="PTHR43798">
    <property type="entry name" value="MONOACYLGLYCEROL LIPASE"/>
    <property type="match status" value="1"/>
</dbReference>
<dbReference type="Pfam" id="PF00561">
    <property type="entry name" value="Abhydrolase_1"/>
    <property type="match status" value="1"/>
</dbReference>
<dbReference type="PRINTS" id="PR00111">
    <property type="entry name" value="ABHYDROLASE"/>
</dbReference>
<dbReference type="SUPFAM" id="SSF53474">
    <property type="entry name" value="alpha/beta-Hydrolases"/>
    <property type="match status" value="1"/>
</dbReference>
<gene>
    <name evidence="1" type="primary">rutD</name>
    <name type="ordered locus">SFxv_1098</name>
</gene>
<protein>
    <recommendedName>
        <fullName evidence="1">Putative carbamate hydrolase RutD</fullName>
        <ecNumber evidence="1">3.5.1.-</ecNumber>
    </recommendedName>
    <alternativeName>
        <fullName evidence="1">Aminohydrolase</fullName>
    </alternativeName>
</protein>